<protein>
    <recommendedName>
        <fullName evidence="1">Galactokinase</fullName>
        <ecNumber evidence="1">2.7.1.6</ecNumber>
    </recommendedName>
    <alternativeName>
        <fullName evidence="1">Galactose kinase</fullName>
    </alternativeName>
</protein>
<evidence type="ECO:0000255" key="1">
    <source>
        <dbReference type="HAMAP-Rule" id="MF_00246"/>
    </source>
</evidence>
<accession>Q32IG8</accession>
<organism>
    <name type="scientific">Shigella dysenteriae serotype 1 (strain Sd197)</name>
    <dbReference type="NCBI Taxonomy" id="300267"/>
    <lineage>
        <taxon>Bacteria</taxon>
        <taxon>Pseudomonadati</taxon>
        <taxon>Pseudomonadota</taxon>
        <taxon>Gammaproteobacteria</taxon>
        <taxon>Enterobacterales</taxon>
        <taxon>Enterobacteriaceae</taxon>
        <taxon>Shigella</taxon>
    </lineage>
</organism>
<gene>
    <name evidence="1" type="primary">galK</name>
    <name type="ordered locus">SDY_0704</name>
</gene>
<feature type="chain" id="PRO_1000005762" description="Galactokinase">
    <location>
        <begin position="1"/>
        <end position="382"/>
    </location>
</feature>
<feature type="active site" description="Proton acceptor" evidence="1">
    <location>
        <position position="174"/>
    </location>
</feature>
<feature type="binding site" evidence="1">
    <location>
        <begin position="34"/>
        <end position="37"/>
    </location>
    <ligand>
        <name>substrate</name>
    </ligand>
</feature>
<feature type="binding site" evidence="1">
    <location>
        <begin position="124"/>
        <end position="130"/>
    </location>
    <ligand>
        <name>ATP</name>
        <dbReference type="ChEBI" id="CHEBI:30616"/>
    </ligand>
</feature>
<feature type="binding site" evidence="1">
    <location>
        <position position="130"/>
    </location>
    <ligand>
        <name>Mg(2+)</name>
        <dbReference type="ChEBI" id="CHEBI:18420"/>
    </ligand>
</feature>
<feature type="binding site" evidence="1">
    <location>
        <position position="162"/>
    </location>
    <ligand>
        <name>Mg(2+)</name>
        <dbReference type="ChEBI" id="CHEBI:18420"/>
    </ligand>
</feature>
<feature type="binding site" evidence="1">
    <location>
        <position position="223"/>
    </location>
    <ligand>
        <name>substrate</name>
    </ligand>
</feature>
<feature type="site" description="Transition state stabilizer" evidence="1">
    <location>
        <position position="28"/>
    </location>
</feature>
<reference key="1">
    <citation type="journal article" date="2005" name="Nucleic Acids Res.">
        <title>Genome dynamics and diversity of Shigella species, the etiologic agents of bacillary dysentery.</title>
        <authorList>
            <person name="Yang F."/>
            <person name="Yang J."/>
            <person name="Zhang X."/>
            <person name="Chen L."/>
            <person name="Jiang Y."/>
            <person name="Yan Y."/>
            <person name="Tang X."/>
            <person name="Wang J."/>
            <person name="Xiong Z."/>
            <person name="Dong J."/>
            <person name="Xue Y."/>
            <person name="Zhu Y."/>
            <person name="Xu X."/>
            <person name="Sun L."/>
            <person name="Chen S."/>
            <person name="Nie H."/>
            <person name="Peng J."/>
            <person name="Xu J."/>
            <person name="Wang Y."/>
            <person name="Yuan Z."/>
            <person name="Wen Y."/>
            <person name="Yao Z."/>
            <person name="Shen Y."/>
            <person name="Qiang B."/>
            <person name="Hou Y."/>
            <person name="Yu J."/>
            <person name="Jin Q."/>
        </authorList>
    </citation>
    <scope>NUCLEOTIDE SEQUENCE [LARGE SCALE GENOMIC DNA]</scope>
    <source>
        <strain>Sd197</strain>
    </source>
</reference>
<dbReference type="EC" id="2.7.1.6" evidence="1"/>
<dbReference type="EMBL" id="CP000034">
    <property type="protein sequence ID" value="ABB60889.1"/>
    <property type="molecule type" value="Genomic_DNA"/>
</dbReference>
<dbReference type="RefSeq" id="WP_000053411.1">
    <property type="nucleotide sequence ID" value="NC_007606.1"/>
</dbReference>
<dbReference type="RefSeq" id="YP_402378.1">
    <property type="nucleotide sequence ID" value="NC_007606.1"/>
</dbReference>
<dbReference type="SMR" id="Q32IG8"/>
<dbReference type="STRING" id="300267.SDY_0704"/>
<dbReference type="EnsemblBacteria" id="ABB60889">
    <property type="protein sequence ID" value="ABB60889"/>
    <property type="gene ID" value="SDY_0704"/>
</dbReference>
<dbReference type="KEGG" id="sdy:SDY_0704"/>
<dbReference type="PATRIC" id="fig|300267.13.peg.815"/>
<dbReference type="HOGENOM" id="CLU_017814_2_1_6"/>
<dbReference type="UniPathway" id="UPA00214"/>
<dbReference type="Proteomes" id="UP000002716">
    <property type="component" value="Chromosome"/>
</dbReference>
<dbReference type="GO" id="GO:0005829">
    <property type="term" value="C:cytosol"/>
    <property type="evidence" value="ECO:0007669"/>
    <property type="project" value="TreeGrafter"/>
</dbReference>
<dbReference type="GO" id="GO:0005524">
    <property type="term" value="F:ATP binding"/>
    <property type="evidence" value="ECO:0007669"/>
    <property type="project" value="UniProtKB-UniRule"/>
</dbReference>
<dbReference type="GO" id="GO:0004335">
    <property type="term" value="F:galactokinase activity"/>
    <property type="evidence" value="ECO:0007669"/>
    <property type="project" value="UniProtKB-UniRule"/>
</dbReference>
<dbReference type="GO" id="GO:0000287">
    <property type="term" value="F:magnesium ion binding"/>
    <property type="evidence" value="ECO:0007669"/>
    <property type="project" value="UniProtKB-UniRule"/>
</dbReference>
<dbReference type="GO" id="GO:0006012">
    <property type="term" value="P:galactose metabolic process"/>
    <property type="evidence" value="ECO:0007669"/>
    <property type="project" value="UniProtKB-UniRule"/>
</dbReference>
<dbReference type="FunFam" id="3.30.230.10:FF:000017">
    <property type="entry name" value="Galactokinase"/>
    <property type="match status" value="1"/>
</dbReference>
<dbReference type="FunFam" id="3.30.70.890:FF:000001">
    <property type="entry name" value="Galactokinase"/>
    <property type="match status" value="1"/>
</dbReference>
<dbReference type="Gene3D" id="3.30.230.10">
    <property type="match status" value="1"/>
</dbReference>
<dbReference type="Gene3D" id="3.30.70.890">
    <property type="entry name" value="GHMP kinase, C-terminal domain"/>
    <property type="match status" value="1"/>
</dbReference>
<dbReference type="HAMAP" id="MF_00246">
    <property type="entry name" value="Galactokinase"/>
    <property type="match status" value="1"/>
</dbReference>
<dbReference type="InterPro" id="IPR000705">
    <property type="entry name" value="Galactokinase"/>
</dbReference>
<dbReference type="InterPro" id="IPR022963">
    <property type="entry name" value="Galactokinase_bac"/>
</dbReference>
<dbReference type="InterPro" id="IPR019741">
    <property type="entry name" value="Galactokinase_CS"/>
</dbReference>
<dbReference type="InterPro" id="IPR019539">
    <property type="entry name" value="GalKase_N"/>
</dbReference>
<dbReference type="InterPro" id="IPR013750">
    <property type="entry name" value="GHMP_kinase_C_dom"/>
</dbReference>
<dbReference type="InterPro" id="IPR036554">
    <property type="entry name" value="GHMP_kinase_C_sf"/>
</dbReference>
<dbReference type="InterPro" id="IPR006204">
    <property type="entry name" value="GHMP_kinase_N_dom"/>
</dbReference>
<dbReference type="InterPro" id="IPR006203">
    <property type="entry name" value="GHMP_knse_ATP-bd_CS"/>
</dbReference>
<dbReference type="InterPro" id="IPR006206">
    <property type="entry name" value="Mevalonate/galactokinase"/>
</dbReference>
<dbReference type="InterPro" id="IPR020568">
    <property type="entry name" value="Ribosomal_Su5_D2-typ_SF"/>
</dbReference>
<dbReference type="InterPro" id="IPR014721">
    <property type="entry name" value="Ribsml_uS5_D2-typ_fold_subgr"/>
</dbReference>
<dbReference type="NCBIfam" id="TIGR00131">
    <property type="entry name" value="gal_kin"/>
    <property type="match status" value="1"/>
</dbReference>
<dbReference type="NCBIfam" id="NF003472">
    <property type="entry name" value="PRK05101.1"/>
    <property type="match status" value="1"/>
</dbReference>
<dbReference type="PANTHER" id="PTHR10457:SF7">
    <property type="entry name" value="GALACTOKINASE-RELATED"/>
    <property type="match status" value="1"/>
</dbReference>
<dbReference type="PANTHER" id="PTHR10457">
    <property type="entry name" value="MEVALONATE KINASE/GALACTOKINASE"/>
    <property type="match status" value="1"/>
</dbReference>
<dbReference type="Pfam" id="PF10509">
    <property type="entry name" value="GalKase_gal_bdg"/>
    <property type="match status" value="1"/>
</dbReference>
<dbReference type="Pfam" id="PF08544">
    <property type="entry name" value="GHMP_kinases_C"/>
    <property type="match status" value="1"/>
</dbReference>
<dbReference type="Pfam" id="PF00288">
    <property type="entry name" value="GHMP_kinases_N"/>
    <property type="match status" value="1"/>
</dbReference>
<dbReference type="PIRSF" id="PIRSF000530">
    <property type="entry name" value="Galactokinase"/>
    <property type="match status" value="1"/>
</dbReference>
<dbReference type="PRINTS" id="PR00473">
    <property type="entry name" value="GALCTOKINASE"/>
</dbReference>
<dbReference type="PRINTS" id="PR00959">
    <property type="entry name" value="MEVGALKINASE"/>
</dbReference>
<dbReference type="SUPFAM" id="SSF55060">
    <property type="entry name" value="GHMP Kinase, C-terminal domain"/>
    <property type="match status" value="1"/>
</dbReference>
<dbReference type="SUPFAM" id="SSF54211">
    <property type="entry name" value="Ribosomal protein S5 domain 2-like"/>
    <property type="match status" value="1"/>
</dbReference>
<dbReference type="PROSITE" id="PS00106">
    <property type="entry name" value="GALACTOKINASE"/>
    <property type="match status" value="1"/>
</dbReference>
<dbReference type="PROSITE" id="PS00627">
    <property type="entry name" value="GHMP_KINASES_ATP"/>
    <property type="match status" value="1"/>
</dbReference>
<name>GAL1_SHIDS</name>
<keyword id="KW-0067">ATP-binding</keyword>
<keyword id="KW-0119">Carbohydrate metabolism</keyword>
<keyword id="KW-0963">Cytoplasm</keyword>
<keyword id="KW-0299">Galactose metabolism</keyword>
<keyword id="KW-0418">Kinase</keyword>
<keyword id="KW-0460">Magnesium</keyword>
<keyword id="KW-0479">Metal-binding</keyword>
<keyword id="KW-0547">Nucleotide-binding</keyword>
<keyword id="KW-1185">Reference proteome</keyword>
<keyword id="KW-0808">Transferase</keyword>
<proteinExistence type="inferred from homology"/>
<sequence length="382" mass="41423">MSLKEKTQSLFANAFGYPATHTIQAPGRVNLIGEHTDYNDGFVLPCAIDYQTVISCAPRDDRKVRVMAADYENQLDEFSLDAPIVAHENYQWANYVRGVVKHLQLRNNSFGGVDMVISGNVPQGAGLSSSASLEVAVGTVLQQLYHLPLDGAQIALNGQEAENQFVGCNCGIMDQLISALGKKDHALLIDCRSLGTKAVSMPKGVAVVIINSNFKRTLVGSEYNTRREQCETGARFFQQPALRDVTIEEFNAVAHELDPIVAKHVRHILTENARTVEAASALEQGDLKRMGELMAESHASMRDDFEITVPQIDTLVEIVKAVIGDKGGVRMTGGGFGGCIVALIPEELVPAVQQAVAEQYEAKTGIKETFYVCKPSQGAGQC</sequence>
<comment type="function">
    <text evidence="1">Catalyzes the transfer of the gamma-phosphate of ATP to D-galactose to form alpha-D-galactose-1-phosphate (Gal-1-P).</text>
</comment>
<comment type="catalytic activity">
    <reaction evidence="1">
        <text>alpha-D-galactose + ATP = alpha-D-galactose 1-phosphate + ADP + H(+)</text>
        <dbReference type="Rhea" id="RHEA:13553"/>
        <dbReference type="ChEBI" id="CHEBI:15378"/>
        <dbReference type="ChEBI" id="CHEBI:28061"/>
        <dbReference type="ChEBI" id="CHEBI:30616"/>
        <dbReference type="ChEBI" id="CHEBI:58336"/>
        <dbReference type="ChEBI" id="CHEBI:456216"/>
        <dbReference type="EC" id="2.7.1.6"/>
    </reaction>
</comment>
<comment type="pathway">
    <text evidence="1">Carbohydrate metabolism; galactose metabolism.</text>
</comment>
<comment type="subcellular location">
    <subcellularLocation>
        <location evidence="1">Cytoplasm</location>
    </subcellularLocation>
</comment>
<comment type="similarity">
    <text evidence="1">Belongs to the GHMP kinase family. GalK subfamily.</text>
</comment>